<protein>
    <recommendedName>
        <fullName evidence="1">ATP phosphoribosyltransferase regulatory subunit</fullName>
    </recommendedName>
</protein>
<gene>
    <name evidence="1" type="primary">hisZ</name>
    <name type="ordered locus">Bcep1808_1729</name>
</gene>
<name>HISZ_BURVG</name>
<dbReference type="EMBL" id="CP000614">
    <property type="protein sequence ID" value="ABO54733.1"/>
    <property type="molecule type" value="Genomic_DNA"/>
</dbReference>
<dbReference type="SMR" id="A4JEN0"/>
<dbReference type="KEGG" id="bvi:Bcep1808_1729"/>
<dbReference type="eggNOG" id="COG3705">
    <property type="taxonomic scope" value="Bacteria"/>
</dbReference>
<dbReference type="HOGENOM" id="CLU_025113_0_1_4"/>
<dbReference type="UniPathway" id="UPA00031">
    <property type="reaction ID" value="UER00006"/>
</dbReference>
<dbReference type="Proteomes" id="UP000002287">
    <property type="component" value="Chromosome 1"/>
</dbReference>
<dbReference type="GO" id="GO:0005737">
    <property type="term" value="C:cytoplasm"/>
    <property type="evidence" value="ECO:0007669"/>
    <property type="project" value="UniProtKB-SubCell"/>
</dbReference>
<dbReference type="GO" id="GO:0004821">
    <property type="term" value="F:histidine-tRNA ligase activity"/>
    <property type="evidence" value="ECO:0007669"/>
    <property type="project" value="TreeGrafter"/>
</dbReference>
<dbReference type="GO" id="GO:0006427">
    <property type="term" value="P:histidyl-tRNA aminoacylation"/>
    <property type="evidence" value="ECO:0007669"/>
    <property type="project" value="TreeGrafter"/>
</dbReference>
<dbReference type="GO" id="GO:0000105">
    <property type="term" value="P:L-histidine biosynthetic process"/>
    <property type="evidence" value="ECO:0007669"/>
    <property type="project" value="UniProtKB-UniRule"/>
</dbReference>
<dbReference type="CDD" id="cd00773">
    <property type="entry name" value="HisRS-like_core"/>
    <property type="match status" value="1"/>
</dbReference>
<dbReference type="Gene3D" id="3.30.930.10">
    <property type="entry name" value="Bira Bifunctional Protein, Domain 2"/>
    <property type="match status" value="1"/>
</dbReference>
<dbReference type="HAMAP" id="MF_00125">
    <property type="entry name" value="HisZ"/>
    <property type="match status" value="1"/>
</dbReference>
<dbReference type="InterPro" id="IPR045864">
    <property type="entry name" value="aa-tRNA-synth_II/BPL/LPL"/>
</dbReference>
<dbReference type="InterPro" id="IPR041715">
    <property type="entry name" value="HisRS-like_core"/>
</dbReference>
<dbReference type="InterPro" id="IPR004516">
    <property type="entry name" value="HisRS/HisZ"/>
</dbReference>
<dbReference type="InterPro" id="IPR004517">
    <property type="entry name" value="HisZ"/>
</dbReference>
<dbReference type="NCBIfam" id="TIGR00443">
    <property type="entry name" value="hisZ_biosyn_reg"/>
    <property type="match status" value="1"/>
</dbReference>
<dbReference type="NCBIfam" id="NF008935">
    <property type="entry name" value="PRK12292.1-1"/>
    <property type="match status" value="1"/>
</dbReference>
<dbReference type="NCBIfam" id="NF009086">
    <property type="entry name" value="PRK12421.1"/>
    <property type="match status" value="1"/>
</dbReference>
<dbReference type="PANTHER" id="PTHR43707:SF1">
    <property type="entry name" value="HISTIDINE--TRNA LIGASE, MITOCHONDRIAL-RELATED"/>
    <property type="match status" value="1"/>
</dbReference>
<dbReference type="PANTHER" id="PTHR43707">
    <property type="entry name" value="HISTIDYL-TRNA SYNTHETASE"/>
    <property type="match status" value="1"/>
</dbReference>
<dbReference type="Pfam" id="PF13393">
    <property type="entry name" value="tRNA-synt_His"/>
    <property type="match status" value="1"/>
</dbReference>
<dbReference type="PIRSF" id="PIRSF001549">
    <property type="entry name" value="His-tRNA_synth"/>
    <property type="match status" value="1"/>
</dbReference>
<dbReference type="SUPFAM" id="SSF55681">
    <property type="entry name" value="Class II aaRS and biotin synthetases"/>
    <property type="match status" value="1"/>
</dbReference>
<reference key="1">
    <citation type="submission" date="2007-03" db="EMBL/GenBank/DDBJ databases">
        <title>Complete sequence of chromosome 1 of Burkholderia vietnamiensis G4.</title>
        <authorList>
            <consortium name="US DOE Joint Genome Institute"/>
            <person name="Copeland A."/>
            <person name="Lucas S."/>
            <person name="Lapidus A."/>
            <person name="Barry K."/>
            <person name="Detter J.C."/>
            <person name="Glavina del Rio T."/>
            <person name="Hammon N."/>
            <person name="Israni S."/>
            <person name="Dalin E."/>
            <person name="Tice H."/>
            <person name="Pitluck S."/>
            <person name="Chain P."/>
            <person name="Malfatti S."/>
            <person name="Shin M."/>
            <person name="Vergez L."/>
            <person name="Schmutz J."/>
            <person name="Larimer F."/>
            <person name="Land M."/>
            <person name="Hauser L."/>
            <person name="Kyrpides N."/>
            <person name="Tiedje J."/>
            <person name="Richardson P."/>
        </authorList>
    </citation>
    <scope>NUCLEOTIDE SEQUENCE [LARGE SCALE GENOMIC DNA]</scope>
    <source>
        <strain>G4 / LMG 22486</strain>
    </source>
</reference>
<organism>
    <name type="scientific">Burkholderia vietnamiensis (strain G4 / LMG 22486)</name>
    <name type="common">Burkholderia cepacia (strain R1808)</name>
    <dbReference type="NCBI Taxonomy" id="269482"/>
    <lineage>
        <taxon>Bacteria</taxon>
        <taxon>Pseudomonadati</taxon>
        <taxon>Pseudomonadota</taxon>
        <taxon>Betaproteobacteria</taxon>
        <taxon>Burkholderiales</taxon>
        <taxon>Burkholderiaceae</taxon>
        <taxon>Burkholderia</taxon>
        <taxon>Burkholderia cepacia complex</taxon>
    </lineage>
</organism>
<sequence length="382" mass="41520">MSTWLLPENIADVLPSEARKIEELRRRLLDRFRSYGYEMVMPPLLEYLESLLTSGGADLRLRTFKLVDQLSGRTLGLRADITPQVARIDAHLLNRQGVTRLCYAGHVMHTRPRGLHATREQIQIGAEIYGHAGLEADLEIQQLMLDALHLAGLSRIRLDLCHAGVLAALLARDAQAAARGEALYDALSGKDVPLLHELTDDLGADTRAALRALPHLYGDASVLDEARARLPVLPEITRALDDLAQLAASAKGVEVAVDLADLRGYAYHSGAMFTAYIDGVPNAIARGGRYDHVGQAYGRARPATGFSLDLRELARISPVEARGTAILAPWAQDDALSAAVAALRDAGEVVIQALPGHDHVLDEFACDRSLVERAGAWVVEPR</sequence>
<accession>A4JEN0</accession>
<proteinExistence type="inferred from homology"/>
<evidence type="ECO:0000255" key="1">
    <source>
        <dbReference type="HAMAP-Rule" id="MF_00125"/>
    </source>
</evidence>
<feature type="chain" id="PRO_1000016255" description="ATP phosphoribosyltransferase regulatory subunit">
    <location>
        <begin position="1"/>
        <end position="382"/>
    </location>
</feature>
<comment type="function">
    <text evidence="1">Required for the first step of histidine biosynthesis. May allow the feedback regulation of ATP phosphoribosyltransferase activity by histidine.</text>
</comment>
<comment type="pathway">
    <text evidence="1">Amino-acid biosynthesis; L-histidine biosynthesis; L-histidine from 5-phospho-alpha-D-ribose 1-diphosphate: step 1/9.</text>
</comment>
<comment type="subunit">
    <text evidence="1">Heteromultimer composed of HisG and HisZ subunits.</text>
</comment>
<comment type="subcellular location">
    <subcellularLocation>
        <location evidence="1">Cytoplasm</location>
    </subcellularLocation>
</comment>
<comment type="miscellaneous">
    <text>This function is generally fulfilled by the C-terminal part of HisG, which is missing in some bacteria such as this one.</text>
</comment>
<comment type="similarity">
    <text evidence="1">Belongs to the class-II aminoacyl-tRNA synthetase family. HisZ subfamily.</text>
</comment>
<keyword id="KW-0028">Amino-acid biosynthesis</keyword>
<keyword id="KW-0963">Cytoplasm</keyword>
<keyword id="KW-0368">Histidine biosynthesis</keyword>